<protein>
    <recommendedName>
        <fullName>Cationic amino acid transporter 9, chloroplastic</fullName>
    </recommendedName>
</protein>
<keyword id="KW-0029">Amino-acid transport</keyword>
<keyword id="KW-0150">Chloroplast</keyword>
<keyword id="KW-0472">Membrane</keyword>
<keyword id="KW-0934">Plastid</keyword>
<keyword id="KW-1185">Reference proteome</keyword>
<keyword id="KW-0809">Transit peptide</keyword>
<keyword id="KW-0812">Transmembrane</keyword>
<keyword id="KW-1133">Transmembrane helix</keyword>
<keyword id="KW-0813">Transport</keyword>
<gene>
    <name type="primary">CAT9</name>
    <name type="ordered locus">At1g05940</name>
    <name type="ORF">T21E18.1</name>
</gene>
<dbReference type="EMBL" id="AC024174">
    <property type="protein sequence ID" value="AAF80119.1"/>
    <property type="status" value="ALT_SEQ"/>
    <property type="molecule type" value="Genomic_DNA"/>
</dbReference>
<dbReference type="EMBL" id="CP002684">
    <property type="protein sequence ID" value="AEE27921.1"/>
    <property type="molecule type" value="Genomic_DNA"/>
</dbReference>
<dbReference type="EMBL" id="AF360321">
    <property type="protein sequence ID" value="AAK26031.1"/>
    <property type="molecule type" value="mRNA"/>
</dbReference>
<dbReference type="EMBL" id="AY113890">
    <property type="protein sequence ID" value="AAM44938.1"/>
    <property type="molecule type" value="mRNA"/>
</dbReference>
<dbReference type="PIR" id="E86194">
    <property type="entry name" value="E86194"/>
</dbReference>
<dbReference type="RefSeq" id="NP_563754.1">
    <property type="nucleotide sequence ID" value="NM_100475.4"/>
</dbReference>
<dbReference type="SMR" id="Q9C5D6"/>
<dbReference type="BioGRID" id="22346">
    <property type="interactions" value="12"/>
</dbReference>
<dbReference type="FunCoup" id="Q9C5D6">
    <property type="interactions" value="788"/>
</dbReference>
<dbReference type="IntAct" id="Q9C5D6">
    <property type="interactions" value="9"/>
</dbReference>
<dbReference type="STRING" id="3702.Q9C5D6"/>
<dbReference type="iPTMnet" id="Q9C5D6"/>
<dbReference type="SwissPalm" id="Q9C5D6"/>
<dbReference type="PaxDb" id="3702-AT1G05940.1"/>
<dbReference type="ProteomicsDB" id="240458"/>
<dbReference type="EnsemblPlants" id="AT1G05940.1">
    <property type="protein sequence ID" value="AT1G05940.1"/>
    <property type="gene ID" value="AT1G05940"/>
</dbReference>
<dbReference type="GeneID" id="837104"/>
<dbReference type="Gramene" id="AT1G05940.1">
    <property type="protein sequence ID" value="AT1G05940.1"/>
    <property type="gene ID" value="AT1G05940"/>
</dbReference>
<dbReference type="KEGG" id="ath:AT1G05940"/>
<dbReference type="Araport" id="AT1G05940"/>
<dbReference type="TAIR" id="AT1G05940">
    <property type="gene designation" value="CAT9"/>
</dbReference>
<dbReference type="eggNOG" id="KOG1286">
    <property type="taxonomic scope" value="Eukaryota"/>
</dbReference>
<dbReference type="HOGENOM" id="CLU_007946_15_10_1"/>
<dbReference type="InParanoid" id="Q9C5D6"/>
<dbReference type="PhylomeDB" id="Q9C5D6"/>
<dbReference type="PRO" id="PR:Q9C5D6"/>
<dbReference type="Proteomes" id="UP000006548">
    <property type="component" value="Chromosome 1"/>
</dbReference>
<dbReference type="ExpressionAtlas" id="Q9C5D6">
    <property type="expression patterns" value="baseline and differential"/>
</dbReference>
<dbReference type="GO" id="GO:0031969">
    <property type="term" value="C:chloroplast membrane"/>
    <property type="evidence" value="ECO:0007669"/>
    <property type="project" value="UniProtKB-SubCell"/>
</dbReference>
<dbReference type="GO" id="GO:0000325">
    <property type="term" value="C:plant-type vacuole"/>
    <property type="evidence" value="ECO:0007005"/>
    <property type="project" value="TAIR"/>
</dbReference>
<dbReference type="GO" id="GO:0022857">
    <property type="term" value="F:transmembrane transporter activity"/>
    <property type="evidence" value="ECO:0007669"/>
    <property type="project" value="InterPro"/>
</dbReference>
<dbReference type="GO" id="GO:0006865">
    <property type="term" value="P:amino acid transport"/>
    <property type="evidence" value="ECO:0007669"/>
    <property type="project" value="UniProtKB-KW"/>
</dbReference>
<dbReference type="FunFam" id="1.20.1740.10:FF:000078">
    <property type="entry name" value="Cationic amino acid transporter 9"/>
    <property type="match status" value="1"/>
</dbReference>
<dbReference type="Gene3D" id="1.20.1740.10">
    <property type="entry name" value="Amino acid/polyamine transporter I"/>
    <property type="match status" value="1"/>
</dbReference>
<dbReference type="InterPro" id="IPR002293">
    <property type="entry name" value="AA/rel_permease1"/>
</dbReference>
<dbReference type="InterPro" id="IPR029485">
    <property type="entry name" value="CAT_C"/>
</dbReference>
<dbReference type="PANTHER" id="PTHR43243:SF45">
    <property type="entry name" value="CATIONIC AMINO ACID TRANSPORTER 9, CHLOROPLASTIC"/>
    <property type="match status" value="1"/>
</dbReference>
<dbReference type="PANTHER" id="PTHR43243">
    <property type="entry name" value="INNER MEMBRANE TRANSPORTER YGJI-RELATED"/>
    <property type="match status" value="1"/>
</dbReference>
<dbReference type="Pfam" id="PF13520">
    <property type="entry name" value="AA_permease_2"/>
    <property type="match status" value="1"/>
</dbReference>
<dbReference type="Pfam" id="PF13906">
    <property type="entry name" value="AA_permease_C"/>
    <property type="match status" value="1"/>
</dbReference>
<dbReference type="PIRSF" id="PIRSF006060">
    <property type="entry name" value="AA_transporter"/>
    <property type="match status" value="1"/>
</dbReference>
<evidence type="ECO:0000250" key="1"/>
<evidence type="ECO:0000255" key="2"/>
<evidence type="ECO:0000269" key="3">
    <source>
    </source>
</evidence>
<evidence type="ECO:0000305" key="4"/>
<accession>Q9C5D6</accession>
<accession>Q9LNF0</accession>
<comment type="function">
    <text evidence="1">Permease involved in the transport of the cationic amino acids.</text>
</comment>
<comment type="subcellular location">
    <subcellularLocation>
        <location>Plastid</location>
        <location>Chloroplast membrane</location>
        <topology>Multi-pass membrane protein</topology>
    </subcellularLocation>
</comment>
<comment type="tissue specificity">
    <text evidence="3">Expressed in roots, stems, flowers, and leaves.</text>
</comment>
<comment type="similarity">
    <text evidence="4">Belongs to the amino acid-polyamine-organocation (APC) superfamily. Cationic amino acid transporter (CAT) (TC 2.A.3.3) family.</text>
</comment>
<comment type="sequence caution" evidence="4">
    <conflict type="erroneous gene model prediction">
        <sequence resource="EMBL-CDS" id="AAF80119"/>
    </conflict>
</comment>
<organism>
    <name type="scientific">Arabidopsis thaliana</name>
    <name type="common">Mouse-ear cress</name>
    <dbReference type="NCBI Taxonomy" id="3702"/>
    <lineage>
        <taxon>Eukaryota</taxon>
        <taxon>Viridiplantae</taxon>
        <taxon>Streptophyta</taxon>
        <taxon>Embryophyta</taxon>
        <taxon>Tracheophyta</taxon>
        <taxon>Spermatophyta</taxon>
        <taxon>Magnoliopsida</taxon>
        <taxon>eudicotyledons</taxon>
        <taxon>Gunneridae</taxon>
        <taxon>Pentapetalae</taxon>
        <taxon>rosids</taxon>
        <taxon>malvids</taxon>
        <taxon>Brassicales</taxon>
        <taxon>Brassicaceae</taxon>
        <taxon>Camelineae</taxon>
        <taxon>Arabidopsis</taxon>
    </lineage>
</organism>
<name>CAAT9_ARATH</name>
<proteinExistence type="evidence at transcript level"/>
<feature type="transit peptide" description="Chloroplast" evidence="2">
    <location>
        <begin position="1"/>
        <end position="41"/>
    </location>
</feature>
<feature type="chain" id="PRO_0000415785" description="Cationic amino acid transporter 9, chloroplastic">
    <location>
        <begin position="42"/>
        <end position="569"/>
    </location>
</feature>
<feature type="transmembrane region" description="Helical" evidence="2">
    <location>
        <begin position="53"/>
        <end position="73"/>
    </location>
</feature>
<feature type="transmembrane region" description="Helical" evidence="2">
    <location>
        <begin position="81"/>
        <end position="101"/>
    </location>
</feature>
<feature type="transmembrane region" description="Helical" evidence="2">
    <location>
        <begin position="113"/>
        <end position="135"/>
    </location>
</feature>
<feature type="transmembrane region" description="Helical" evidence="2">
    <location>
        <begin position="155"/>
        <end position="175"/>
    </location>
</feature>
<feature type="transmembrane region" description="Helical" evidence="2">
    <location>
        <begin position="181"/>
        <end position="201"/>
    </location>
</feature>
<feature type="transmembrane region" description="Helical" evidence="2">
    <location>
        <begin position="215"/>
        <end position="235"/>
    </location>
</feature>
<feature type="transmembrane region" description="Helical" evidence="2">
    <location>
        <begin position="250"/>
        <end position="270"/>
    </location>
</feature>
<feature type="transmembrane region" description="Helical" evidence="2">
    <location>
        <begin position="284"/>
        <end position="304"/>
    </location>
</feature>
<feature type="transmembrane region" description="Helical" evidence="2">
    <location>
        <begin position="333"/>
        <end position="353"/>
    </location>
</feature>
<feature type="transmembrane region" description="Helical" evidence="2">
    <location>
        <begin position="406"/>
        <end position="428"/>
    </location>
</feature>
<feature type="transmembrane region" description="Helical" evidence="2">
    <location>
        <begin position="444"/>
        <end position="464"/>
    </location>
</feature>
<feature type="transmembrane region" description="Helical" evidence="2">
    <location>
        <begin position="467"/>
        <end position="487"/>
    </location>
</feature>
<feature type="transmembrane region" description="Helical" evidence="2">
    <location>
        <begin position="502"/>
        <end position="522"/>
    </location>
</feature>
<feature type="transmembrane region" description="Helical" evidence="2">
    <location>
        <begin position="528"/>
        <end position="548"/>
    </location>
</feature>
<reference key="1">
    <citation type="journal article" date="2000" name="Nature">
        <title>Sequence and analysis of chromosome 1 of the plant Arabidopsis thaliana.</title>
        <authorList>
            <person name="Theologis A."/>
            <person name="Ecker J.R."/>
            <person name="Palm C.J."/>
            <person name="Federspiel N.A."/>
            <person name="Kaul S."/>
            <person name="White O."/>
            <person name="Alonso J."/>
            <person name="Altafi H."/>
            <person name="Araujo R."/>
            <person name="Bowman C.L."/>
            <person name="Brooks S.Y."/>
            <person name="Buehler E."/>
            <person name="Chan A."/>
            <person name="Chao Q."/>
            <person name="Chen H."/>
            <person name="Cheuk R.F."/>
            <person name="Chin C.W."/>
            <person name="Chung M.K."/>
            <person name="Conn L."/>
            <person name="Conway A.B."/>
            <person name="Conway A.R."/>
            <person name="Creasy T.H."/>
            <person name="Dewar K."/>
            <person name="Dunn P."/>
            <person name="Etgu P."/>
            <person name="Feldblyum T.V."/>
            <person name="Feng J.-D."/>
            <person name="Fong B."/>
            <person name="Fujii C.Y."/>
            <person name="Gill J.E."/>
            <person name="Goldsmith A.D."/>
            <person name="Haas B."/>
            <person name="Hansen N.F."/>
            <person name="Hughes B."/>
            <person name="Huizar L."/>
            <person name="Hunter J.L."/>
            <person name="Jenkins J."/>
            <person name="Johnson-Hopson C."/>
            <person name="Khan S."/>
            <person name="Khaykin E."/>
            <person name="Kim C.J."/>
            <person name="Koo H.L."/>
            <person name="Kremenetskaia I."/>
            <person name="Kurtz D.B."/>
            <person name="Kwan A."/>
            <person name="Lam B."/>
            <person name="Langin-Hooper S."/>
            <person name="Lee A."/>
            <person name="Lee J.M."/>
            <person name="Lenz C.A."/>
            <person name="Li J.H."/>
            <person name="Li Y.-P."/>
            <person name="Lin X."/>
            <person name="Liu S.X."/>
            <person name="Liu Z.A."/>
            <person name="Luros J.S."/>
            <person name="Maiti R."/>
            <person name="Marziali A."/>
            <person name="Militscher J."/>
            <person name="Miranda M."/>
            <person name="Nguyen M."/>
            <person name="Nierman W.C."/>
            <person name="Osborne B.I."/>
            <person name="Pai G."/>
            <person name="Peterson J."/>
            <person name="Pham P.K."/>
            <person name="Rizzo M."/>
            <person name="Rooney T."/>
            <person name="Rowley D."/>
            <person name="Sakano H."/>
            <person name="Salzberg S.L."/>
            <person name="Schwartz J.R."/>
            <person name="Shinn P."/>
            <person name="Southwick A.M."/>
            <person name="Sun H."/>
            <person name="Tallon L.J."/>
            <person name="Tambunga G."/>
            <person name="Toriumi M.J."/>
            <person name="Town C.D."/>
            <person name="Utterback T."/>
            <person name="Van Aken S."/>
            <person name="Vaysberg M."/>
            <person name="Vysotskaia V.S."/>
            <person name="Walker M."/>
            <person name="Wu D."/>
            <person name="Yu G."/>
            <person name="Fraser C.M."/>
            <person name="Venter J.C."/>
            <person name="Davis R.W."/>
        </authorList>
    </citation>
    <scope>NUCLEOTIDE SEQUENCE [LARGE SCALE GENOMIC DNA]</scope>
    <source>
        <strain>cv. Columbia</strain>
    </source>
</reference>
<reference key="2">
    <citation type="journal article" date="2017" name="Plant J.">
        <title>Araport11: a complete reannotation of the Arabidopsis thaliana reference genome.</title>
        <authorList>
            <person name="Cheng C.Y."/>
            <person name="Krishnakumar V."/>
            <person name="Chan A.P."/>
            <person name="Thibaud-Nissen F."/>
            <person name="Schobel S."/>
            <person name="Town C.D."/>
        </authorList>
    </citation>
    <scope>GENOME REANNOTATION</scope>
    <source>
        <strain>cv. Columbia</strain>
    </source>
</reference>
<reference key="3">
    <citation type="journal article" date="2003" name="Science">
        <title>Empirical analysis of transcriptional activity in the Arabidopsis genome.</title>
        <authorList>
            <person name="Yamada K."/>
            <person name="Lim J."/>
            <person name="Dale J.M."/>
            <person name="Chen H."/>
            <person name="Shinn P."/>
            <person name="Palm C.J."/>
            <person name="Southwick A.M."/>
            <person name="Wu H.C."/>
            <person name="Kim C.J."/>
            <person name="Nguyen M."/>
            <person name="Pham P.K."/>
            <person name="Cheuk R.F."/>
            <person name="Karlin-Newmann G."/>
            <person name="Liu S.X."/>
            <person name="Lam B."/>
            <person name="Sakano H."/>
            <person name="Wu T."/>
            <person name="Yu G."/>
            <person name="Miranda M."/>
            <person name="Quach H.L."/>
            <person name="Tripp M."/>
            <person name="Chang C.H."/>
            <person name="Lee J.M."/>
            <person name="Toriumi M.J."/>
            <person name="Chan M.M."/>
            <person name="Tang C.C."/>
            <person name="Onodera C.S."/>
            <person name="Deng J.M."/>
            <person name="Akiyama K."/>
            <person name="Ansari Y."/>
            <person name="Arakawa T."/>
            <person name="Banh J."/>
            <person name="Banno F."/>
            <person name="Bowser L."/>
            <person name="Brooks S.Y."/>
            <person name="Carninci P."/>
            <person name="Chao Q."/>
            <person name="Choy N."/>
            <person name="Enju A."/>
            <person name="Goldsmith A.D."/>
            <person name="Gurjal M."/>
            <person name="Hansen N.F."/>
            <person name="Hayashizaki Y."/>
            <person name="Johnson-Hopson C."/>
            <person name="Hsuan V.W."/>
            <person name="Iida K."/>
            <person name="Karnes M."/>
            <person name="Khan S."/>
            <person name="Koesema E."/>
            <person name="Ishida J."/>
            <person name="Jiang P.X."/>
            <person name="Jones T."/>
            <person name="Kawai J."/>
            <person name="Kamiya A."/>
            <person name="Meyers C."/>
            <person name="Nakajima M."/>
            <person name="Narusaka M."/>
            <person name="Seki M."/>
            <person name="Sakurai T."/>
            <person name="Satou M."/>
            <person name="Tamse R."/>
            <person name="Vaysberg M."/>
            <person name="Wallender E.K."/>
            <person name="Wong C."/>
            <person name="Yamamura Y."/>
            <person name="Yuan S."/>
            <person name="Shinozaki K."/>
            <person name="Davis R.W."/>
            <person name="Theologis A."/>
            <person name="Ecker J.R."/>
        </authorList>
    </citation>
    <scope>NUCLEOTIDE SEQUENCE [LARGE SCALE MRNA]</scope>
    <source>
        <strain>cv. Columbia</strain>
    </source>
</reference>
<reference key="4">
    <citation type="journal article" date="2004" name="Plant Physiol.">
        <title>Molecular and functional characterization of a family of amino acid transporters from Arabidopsis.</title>
        <authorList>
            <person name="Su Y.-H."/>
            <person name="Frommer W.B."/>
            <person name="Ludewig U."/>
        </authorList>
    </citation>
    <scope>TISSUE SPECIFICITY</scope>
    <scope>GENE FAMILY</scope>
    <scope>NOMENCLATURE</scope>
    <source>
        <strain>cv. Columbia</strain>
    </source>
</reference>
<sequence length="569" mass="60176">MGGHEGFSNQRLSSATWFSHFRASALRSKSLPPPSSQTAVRSTSGDSLVRRLGLFDLILLGVGASIGAGVFVVTGTVARDAGPGVTISFLLAGASCVLNALCYAELSSRFPAVVGGAYMYSYSAFNEITAFLVFVQLMLDYHIGAASISRSLASYAVALLELFPALKGSIPLWMGSGKELLGGLLSLNILAPILLALLTLVLCQGVRESSAVNSVMTATKVVIVLVVICAGAFEIDVANWSPFAPNGFKAVLTGATVVFFSYVGFDAVANSAEESKNPQRDLPIGIMGSLLVCISLYIGVCLVLTGMVPFSLLSEDAPLAEAFSSKGMKFVSILISIGAVAGLTTTLLVGLYVQSRLYLGLGRDGLLPSIFSRIHPTLHTPLHSQIWCGIVAGVLAGIFNVHSLSHILSVGTLTGYSVVAACVVALRLNDKKDRESSNRWTSSWQEGVICLVIIACSGFGAGVFYRFSASVIFILLSVGVAVVASAVLHYRQAYALPLGSGFSCPGVPIVPSVCIFFNIFLFAQLHYEAWIRFVVVSVLATAVYALYGQYHADPSMLDYQRAPETESDA</sequence>